<accession>P21508</accession>
<keyword id="KW-0150">Chloroplast</keyword>
<keyword id="KW-0934">Plastid</keyword>
<keyword id="KW-0687">Ribonucleoprotein</keyword>
<keyword id="KW-0689">Ribosomal protein</keyword>
<keyword id="KW-0694">RNA-binding</keyword>
<keyword id="KW-0699">rRNA-binding</keyword>
<geneLocation type="chloroplast"/>
<protein>
    <recommendedName>
        <fullName evidence="2">Small ribosomal subunit protein uS8c</fullName>
    </recommendedName>
    <alternativeName>
        <fullName>30S ribosomal protein S8, chloroplastic</fullName>
    </alternativeName>
</protein>
<dbReference type="EMBL" id="Z11874">
    <property type="protein sequence ID" value="CAA77925.1"/>
    <property type="molecule type" value="Genomic_DNA"/>
</dbReference>
<dbReference type="EMBL" id="X70810">
    <property type="protein sequence ID" value="CAA50108.1"/>
    <property type="molecule type" value="Genomic_DNA"/>
</dbReference>
<dbReference type="PIR" id="S09289">
    <property type="entry name" value="R3EG8"/>
</dbReference>
<dbReference type="RefSeq" id="NP_041921.1">
    <property type="nucleotide sequence ID" value="NC_001603.2"/>
</dbReference>
<dbReference type="SMR" id="P21508"/>
<dbReference type="GeneID" id="807486"/>
<dbReference type="GO" id="GO:0009507">
    <property type="term" value="C:chloroplast"/>
    <property type="evidence" value="ECO:0007669"/>
    <property type="project" value="UniProtKB-SubCell"/>
</dbReference>
<dbReference type="GO" id="GO:1990904">
    <property type="term" value="C:ribonucleoprotein complex"/>
    <property type="evidence" value="ECO:0007669"/>
    <property type="project" value="UniProtKB-KW"/>
</dbReference>
<dbReference type="GO" id="GO:0005840">
    <property type="term" value="C:ribosome"/>
    <property type="evidence" value="ECO:0007669"/>
    <property type="project" value="UniProtKB-KW"/>
</dbReference>
<dbReference type="GO" id="GO:0019843">
    <property type="term" value="F:rRNA binding"/>
    <property type="evidence" value="ECO:0007669"/>
    <property type="project" value="UniProtKB-UniRule"/>
</dbReference>
<dbReference type="GO" id="GO:0003735">
    <property type="term" value="F:structural constituent of ribosome"/>
    <property type="evidence" value="ECO:0007669"/>
    <property type="project" value="InterPro"/>
</dbReference>
<dbReference type="GO" id="GO:0006412">
    <property type="term" value="P:translation"/>
    <property type="evidence" value="ECO:0007669"/>
    <property type="project" value="UniProtKB-UniRule"/>
</dbReference>
<dbReference type="FunFam" id="3.30.1490.10:FF:000001">
    <property type="entry name" value="30S ribosomal protein S8"/>
    <property type="match status" value="1"/>
</dbReference>
<dbReference type="Gene3D" id="3.30.1370.30">
    <property type="match status" value="1"/>
</dbReference>
<dbReference type="Gene3D" id="3.30.1490.10">
    <property type="match status" value="1"/>
</dbReference>
<dbReference type="HAMAP" id="MF_01302_B">
    <property type="entry name" value="Ribosomal_uS8_B"/>
    <property type="match status" value="1"/>
</dbReference>
<dbReference type="InterPro" id="IPR000630">
    <property type="entry name" value="Ribosomal_uS8"/>
</dbReference>
<dbReference type="InterPro" id="IPR047863">
    <property type="entry name" value="Ribosomal_uS8_CS"/>
</dbReference>
<dbReference type="InterPro" id="IPR035987">
    <property type="entry name" value="Ribosomal_uS8_sf"/>
</dbReference>
<dbReference type="NCBIfam" id="NF001109">
    <property type="entry name" value="PRK00136.1"/>
    <property type="match status" value="1"/>
</dbReference>
<dbReference type="PANTHER" id="PTHR11758">
    <property type="entry name" value="40S RIBOSOMAL PROTEIN S15A"/>
    <property type="match status" value="1"/>
</dbReference>
<dbReference type="Pfam" id="PF00410">
    <property type="entry name" value="Ribosomal_S8"/>
    <property type="match status" value="1"/>
</dbReference>
<dbReference type="SUPFAM" id="SSF56047">
    <property type="entry name" value="Ribosomal protein S8"/>
    <property type="match status" value="1"/>
</dbReference>
<dbReference type="PROSITE" id="PS00053">
    <property type="entry name" value="RIBOSOMAL_S8"/>
    <property type="match status" value="1"/>
</dbReference>
<reference key="1">
    <citation type="journal article" date="1989" name="Nucleic Acids Res.">
        <title>Euglena gracilis chloroplast ribosomal protein operon: a new chloroplast gene for ribosomal protein L5 and description of a novel organelle intron category designated group III.</title>
        <authorList>
            <person name="Christopher D.A."/>
            <person name="Hallick R.B."/>
        </authorList>
    </citation>
    <scope>NUCLEOTIDE SEQUENCE [GENOMIC DNA]</scope>
    <source>
        <strain>Z / UTEX 753</strain>
    </source>
</reference>
<reference key="2">
    <citation type="journal article" date="1993" name="Nucleic Acids Res.">
        <title>Complete sequence of Euglena gracilis chloroplast DNA.</title>
        <authorList>
            <person name="Hallick R.B."/>
            <person name="Hong L."/>
            <person name="Drager R.G."/>
            <person name="Favreau M.R."/>
            <person name="Monfort A."/>
            <person name="Orsat B."/>
            <person name="Spielmann A."/>
            <person name="Stutz E."/>
        </authorList>
    </citation>
    <scope>NUCLEOTIDE SEQUENCE [LARGE SCALE GENOMIC DNA]</scope>
    <source>
        <strain>Z / UTEX 753</strain>
    </source>
</reference>
<organism>
    <name type="scientific">Euglena gracilis</name>
    <dbReference type="NCBI Taxonomy" id="3039"/>
    <lineage>
        <taxon>Eukaryota</taxon>
        <taxon>Discoba</taxon>
        <taxon>Euglenozoa</taxon>
        <taxon>Euglenida</taxon>
        <taxon>Spirocuta</taxon>
        <taxon>Euglenophyceae</taxon>
        <taxon>Euglenales</taxon>
        <taxon>Euglenaceae</taxon>
        <taxon>Euglena</taxon>
    </lineage>
</organism>
<proteinExistence type="inferred from homology"/>
<gene>
    <name type="primary">rps8</name>
</gene>
<feature type="chain" id="PRO_0000126570" description="Small ribosomal subunit protein uS8c">
    <location>
        <begin position="1"/>
        <end position="140"/>
    </location>
</feature>
<comment type="function">
    <text evidence="1">One of the primary rRNA binding proteins, it binds directly to 16S rRNA central domain where it helps coordinate assembly of the platform of the 30S subunit.</text>
</comment>
<comment type="subunit">
    <text evidence="1">Part of the 30S ribosomal subunit.</text>
</comment>
<comment type="subcellular location">
    <subcellularLocation>
        <location>Plastid</location>
        <location>Chloroplast</location>
    </subcellularLocation>
</comment>
<comment type="similarity">
    <text evidence="2">Belongs to the universal ribosomal protein uS8 family.</text>
</comment>
<evidence type="ECO:0000250" key="1"/>
<evidence type="ECO:0000305" key="2"/>
<name>RR8_EUGGR</name>
<sequence>MTNIDVISDMLTRIRNSLLIKARKVNVINTKLTVNIAEILKKEGFIDSFELADATCLTENGVIKKYITIFLKYKGPKQVSYITKIKRVSKPGLRTYSSYKRLQSVAGGVGLTVLSTSKGLMTDRLARSNKIGGEILFYIW</sequence>